<reference key="1">
    <citation type="journal article" date="2005" name="Nature">
        <title>The genome of the social amoeba Dictyostelium discoideum.</title>
        <authorList>
            <person name="Eichinger L."/>
            <person name="Pachebat J.A."/>
            <person name="Gloeckner G."/>
            <person name="Rajandream M.A."/>
            <person name="Sucgang R."/>
            <person name="Berriman M."/>
            <person name="Song J."/>
            <person name="Olsen R."/>
            <person name="Szafranski K."/>
            <person name="Xu Q."/>
            <person name="Tunggal B."/>
            <person name="Kummerfeld S."/>
            <person name="Madera M."/>
            <person name="Konfortov B.A."/>
            <person name="Rivero F."/>
            <person name="Bankier A.T."/>
            <person name="Lehmann R."/>
            <person name="Hamlin N."/>
            <person name="Davies R."/>
            <person name="Gaudet P."/>
            <person name="Fey P."/>
            <person name="Pilcher K."/>
            <person name="Chen G."/>
            <person name="Saunders D."/>
            <person name="Sodergren E.J."/>
            <person name="Davis P."/>
            <person name="Kerhornou A."/>
            <person name="Nie X."/>
            <person name="Hall N."/>
            <person name="Anjard C."/>
            <person name="Hemphill L."/>
            <person name="Bason N."/>
            <person name="Farbrother P."/>
            <person name="Desany B."/>
            <person name="Just E."/>
            <person name="Morio T."/>
            <person name="Rost R."/>
            <person name="Churcher C.M."/>
            <person name="Cooper J."/>
            <person name="Haydock S."/>
            <person name="van Driessche N."/>
            <person name="Cronin A."/>
            <person name="Goodhead I."/>
            <person name="Muzny D.M."/>
            <person name="Mourier T."/>
            <person name="Pain A."/>
            <person name="Lu M."/>
            <person name="Harper D."/>
            <person name="Lindsay R."/>
            <person name="Hauser H."/>
            <person name="James K.D."/>
            <person name="Quiles M."/>
            <person name="Madan Babu M."/>
            <person name="Saito T."/>
            <person name="Buchrieser C."/>
            <person name="Wardroper A."/>
            <person name="Felder M."/>
            <person name="Thangavelu M."/>
            <person name="Johnson D."/>
            <person name="Knights A."/>
            <person name="Loulseged H."/>
            <person name="Mungall K.L."/>
            <person name="Oliver K."/>
            <person name="Price C."/>
            <person name="Quail M.A."/>
            <person name="Urushihara H."/>
            <person name="Hernandez J."/>
            <person name="Rabbinowitsch E."/>
            <person name="Steffen D."/>
            <person name="Sanders M."/>
            <person name="Ma J."/>
            <person name="Kohara Y."/>
            <person name="Sharp S."/>
            <person name="Simmonds M.N."/>
            <person name="Spiegler S."/>
            <person name="Tivey A."/>
            <person name="Sugano S."/>
            <person name="White B."/>
            <person name="Walker D."/>
            <person name="Woodward J.R."/>
            <person name="Winckler T."/>
            <person name="Tanaka Y."/>
            <person name="Shaulsky G."/>
            <person name="Schleicher M."/>
            <person name="Weinstock G.M."/>
            <person name="Rosenthal A."/>
            <person name="Cox E.C."/>
            <person name="Chisholm R.L."/>
            <person name="Gibbs R.A."/>
            <person name="Loomis W.F."/>
            <person name="Platzer M."/>
            <person name="Kay R.R."/>
            <person name="Williams J.G."/>
            <person name="Dear P.H."/>
            <person name="Noegel A.A."/>
            <person name="Barrell B.G."/>
            <person name="Kuspa A."/>
        </authorList>
    </citation>
    <scope>NUCLEOTIDE SEQUENCE [LARGE SCALE GENOMIC DNA]</scope>
    <source>
        <strain>AX4</strain>
    </source>
</reference>
<gene>
    <name type="primary">osbJ</name>
    <name type="ORF">DDB_G0285141</name>
</gene>
<keyword id="KW-1185">Reference proteome</keyword>
<comment type="similarity">
    <text evidence="1">Belongs to the OSBP family.</text>
</comment>
<proteinExistence type="inferred from homology"/>
<name>OSB10_DICDI</name>
<evidence type="ECO:0000305" key="1"/>
<organism>
    <name type="scientific">Dictyostelium discoideum</name>
    <name type="common">Social amoeba</name>
    <dbReference type="NCBI Taxonomy" id="44689"/>
    <lineage>
        <taxon>Eukaryota</taxon>
        <taxon>Amoebozoa</taxon>
        <taxon>Evosea</taxon>
        <taxon>Eumycetozoa</taxon>
        <taxon>Dictyostelia</taxon>
        <taxon>Dictyosteliales</taxon>
        <taxon>Dictyosteliaceae</taxon>
        <taxon>Dictyostelium</taxon>
    </lineage>
</organism>
<dbReference type="EMBL" id="AAFI02000074">
    <property type="protein sequence ID" value="EAL64883.1"/>
    <property type="molecule type" value="Genomic_DNA"/>
</dbReference>
<dbReference type="RefSeq" id="XP_639892.1">
    <property type="nucleotide sequence ID" value="XM_634800.1"/>
</dbReference>
<dbReference type="SMR" id="Q54NM4"/>
<dbReference type="FunCoup" id="Q54NM4">
    <property type="interactions" value="1"/>
</dbReference>
<dbReference type="STRING" id="44689.Q54NM4"/>
<dbReference type="PaxDb" id="44689-DDB0237798"/>
<dbReference type="EnsemblProtists" id="EAL64883">
    <property type="protein sequence ID" value="EAL64883"/>
    <property type="gene ID" value="DDB_G0285141"/>
</dbReference>
<dbReference type="GeneID" id="8624963"/>
<dbReference type="KEGG" id="ddi:DDB_G0285141"/>
<dbReference type="dictyBase" id="DDB_G0285141">
    <property type="gene designation" value="osbJ"/>
</dbReference>
<dbReference type="VEuPathDB" id="AmoebaDB:DDB_G0285141"/>
<dbReference type="eggNOG" id="KOG2210">
    <property type="taxonomic scope" value="Eukaryota"/>
</dbReference>
<dbReference type="HOGENOM" id="CLU_012334_1_0_1"/>
<dbReference type="InParanoid" id="Q54NM4"/>
<dbReference type="OMA" id="VISNWRT"/>
<dbReference type="PhylomeDB" id="Q54NM4"/>
<dbReference type="Reactome" id="R-DDI-1482801">
    <property type="pathway name" value="Acyl chain remodelling of PS"/>
</dbReference>
<dbReference type="Reactome" id="R-DDI-9013407">
    <property type="pathway name" value="RHOH GTPase cycle"/>
</dbReference>
<dbReference type="PRO" id="PR:Q54NM4"/>
<dbReference type="Proteomes" id="UP000002195">
    <property type="component" value="Chromosome 4"/>
</dbReference>
<dbReference type="GO" id="GO:0005829">
    <property type="term" value="C:cytosol"/>
    <property type="evidence" value="ECO:0000318"/>
    <property type="project" value="GO_Central"/>
</dbReference>
<dbReference type="GO" id="GO:0016020">
    <property type="term" value="C:membrane"/>
    <property type="evidence" value="ECO:0000318"/>
    <property type="project" value="GO_Central"/>
</dbReference>
<dbReference type="GO" id="GO:0032934">
    <property type="term" value="F:sterol binding"/>
    <property type="evidence" value="ECO:0000318"/>
    <property type="project" value="GO_Central"/>
</dbReference>
<dbReference type="FunFam" id="3.30.70.3490:FF:000034">
    <property type="match status" value="1"/>
</dbReference>
<dbReference type="FunFam" id="2.40.160.120:FF:000011">
    <property type="entry name" value="Oxysterol-binding protein-related protein 4C"/>
    <property type="match status" value="1"/>
</dbReference>
<dbReference type="Gene3D" id="2.40.160.120">
    <property type="match status" value="1"/>
</dbReference>
<dbReference type="Gene3D" id="3.30.70.3490">
    <property type="match status" value="1"/>
</dbReference>
<dbReference type="InterPro" id="IPR037239">
    <property type="entry name" value="OSBP_sf"/>
</dbReference>
<dbReference type="InterPro" id="IPR000648">
    <property type="entry name" value="Oxysterol-bd"/>
</dbReference>
<dbReference type="PANTHER" id="PTHR10972:SF87">
    <property type="entry name" value="OXYSTEROL-BINDING PROTEIN 10"/>
    <property type="match status" value="1"/>
</dbReference>
<dbReference type="PANTHER" id="PTHR10972">
    <property type="entry name" value="OXYSTEROL-BINDING PROTEIN-RELATED"/>
    <property type="match status" value="1"/>
</dbReference>
<dbReference type="Pfam" id="PF01237">
    <property type="entry name" value="Oxysterol_BP"/>
    <property type="match status" value="1"/>
</dbReference>
<dbReference type="SUPFAM" id="SSF144000">
    <property type="entry name" value="Oxysterol-binding protein-like"/>
    <property type="match status" value="1"/>
</dbReference>
<accession>Q54NM4</accession>
<feature type="chain" id="PRO_0000328473" description="Oxysterol-binding protein 10">
    <location>
        <begin position="1"/>
        <end position="390"/>
    </location>
</feature>
<protein>
    <recommendedName>
        <fullName>Oxysterol-binding protein 10</fullName>
    </recommendedName>
    <alternativeName>
        <fullName>OSBPj</fullName>
    </alternativeName>
</protein>
<sequence>MTDISDESNIGYEEEVEEEIMEDDLDINNDGCDGEDKKKNSGFLKQFASKQPFYKMSLPISYSEPRSFLEKLSDQGSFLDILLKVKNIENEDDRFLEILKFYLSGWIQQKIAKSPFNPVIGETYQCKWVHKDGSTTEYIAEQISHHPPSSSFCMHNQQNGVIFHSHLSPTSKFWGNSLENSMEGKLVYEIPSLQEEYIVEAPKIIVKGVLVGSLSTETVGSTNLTCKKTGYSAEIEFKGKGLFKSKHSLLVKVKHPSSKKALYTLEGKFDGTVSITSTKTGKTTAFFDINSDQIQPITSPLHELEENNSRVVWKHVIENLLNNNEDEASKQKTIVEENQRNLAKTREGKPWIPKNFIKVDNDDNEDSANQNNVYYYSKLIEIRKEIMKNN</sequence>